<accession>A4IRB2</accession>
<dbReference type="EC" id="3.6.4.-" evidence="1"/>
<dbReference type="EMBL" id="CP000557">
    <property type="protein sequence ID" value="ABO67866.1"/>
    <property type="molecule type" value="Genomic_DNA"/>
</dbReference>
<dbReference type="RefSeq" id="WP_011887894.1">
    <property type="nucleotide sequence ID" value="NC_009328.1"/>
</dbReference>
<dbReference type="SMR" id="A4IRB2"/>
<dbReference type="GeneID" id="87623331"/>
<dbReference type="KEGG" id="gtn:GTNG_2521"/>
<dbReference type="eggNOG" id="COG2255">
    <property type="taxonomic scope" value="Bacteria"/>
</dbReference>
<dbReference type="HOGENOM" id="CLU_055599_1_0_9"/>
<dbReference type="Proteomes" id="UP000001578">
    <property type="component" value="Chromosome"/>
</dbReference>
<dbReference type="GO" id="GO:0005737">
    <property type="term" value="C:cytoplasm"/>
    <property type="evidence" value="ECO:0007669"/>
    <property type="project" value="UniProtKB-SubCell"/>
</dbReference>
<dbReference type="GO" id="GO:0048476">
    <property type="term" value="C:Holliday junction resolvase complex"/>
    <property type="evidence" value="ECO:0007669"/>
    <property type="project" value="UniProtKB-UniRule"/>
</dbReference>
<dbReference type="GO" id="GO:0005524">
    <property type="term" value="F:ATP binding"/>
    <property type="evidence" value="ECO:0007669"/>
    <property type="project" value="UniProtKB-UniRule"/>
</dbReference>
<dbReference type="GO" id="GO:0016887">
    <property type="term" value="F:ATP hydrolysis activity"/>
    <property type="evidence" value="ECO:0007669"/>
    <property type="project" value="InterPro"/>
</dbReference>
<dbReference type="GO" id="GO:0000400">
    <property type="term" value="F:four-way junction DNA binding"/>
    <property type="evidence" value="ECO:0007669"/>
    <property type="project" value="UniProtKB-UniRule"/>
</dbReference>
<dbReference type="GO" id="GO:0009378">
    <property type="term" value="F:four-way junction helicase activity"/>
    <property type="evidence" value="ECO:0007669"/>
    <property type="project" value="InterPro"/>
</dbReference>
<dbReference type="GO" id="GO:0006310">
    <property type="term" value="P:DNA recombination"/>
    <property type="evidence" value="ECO:0007669"/>
    <property type="project" value="UniProtKB-UniRule"/>
</dbReference>
<dbReference type="GO" id="GO:0006281">
    <property type="term" value="P:DNA repair"/>
    <property type="evidence" value="ECO:0007669"/>
    <property type="project" value="UniProtKB-UniRule"/>
</dbReference>
<dbReference type="CDD" id="cd00009">
    <property type="entry name" value="AAA"/>
    <property type="match status" value="1"/>
</dbReference>
<dbReference type="Gene3D" id="1.10.8.60">
    <property type="match status" value="1"/>
</dbReference>
<dbReference type="Gene3D" id="3.40.50.300">
    <property type="entry name" value="P-loop containing nucleotide triphosphate hydrolases"/>
    <property type="match status" value="1"/>
</dbReference>
<dbReference type="Gene3D" id="1.10.10.10">
    <property type="entry name" value="Winged helix-like DNA-binding domain superfamily/Winged helix DNA-binding domain"/>
    <property type="match status" value="1"/>
</dbReference>
<dbReference type="HAMAP" id="MF_00016">
    <property type="entry name" value="DNA_HJ_migration_RuvB"/>
    <property type="match status" value="1"/>
</dbReference>
<dbReference type="InterPro" id="IPR003593">
    <property type="entry name" value="AAA+_ATPase"/>
</dbReference>
<dbReference type="InterPro" id="IPR041445">
    <property type="entry name" value="AAA_lid_4"/>
</dbReference>
<dbReference type="InterPro" id="IPR004605">
    <property type="entry name" value="DNA_helicase_Holl-junc_RuvB"/>
</dbReference>
<dbReference type="InterPro" id="IPR027417">
    <property type="entry name" value="P-loop_NTPase"/>
</dbReference>
<dbReference type="InterPro" id="IPR008824">
    <property type="entry name" value="RuvB-like_N"/>
</dbReference>
<dbReference type="InterPro" id="IPR008823">
    <property type="entry name" value="RuvB_C"/>
</dbReference>
<dbReference type="InterPro" id="IPR036388">
    <property type="entry name" value="WH-like_DNA-bd_sf"/>
</dbReference>
<dbReference type="InterPro" id="IPR036390">
    <property type="entry name" value="WH_DNA-bd_sf"/>
</dbReference>
<dbReference type="NCBIfam" id="NF000868">
    <property type="entry name" value="PRK00080.1"/>
    <property type="match status" value="1"/>
</dbReference>
<dbReference type="NCBIfam" id="TIGR00635">
    <property type="entry name" value="ruvB"/>
    <property type="match status" value="1"/>
</dbReference>
<dbReference type="PANTHER" id="PTHR42848">
    <property type="match status" value="1"/>
</dbReference>
<dbReference type="PANTHER" id="PTHR42848:SF1">
    <property type="entry name" value="HOLLIDAY JUNCTION BRANCH MIGRATION COMPLEX SUBUNIT RUVB"/>
    <property type="match status" value="1"/>
</dbReference>
<dbReference type="Pfam" id="PF17864">
    <property type="entry name" value="AAA_lid_4"/>
    <property type="match status" value="1"/>
</dbReference>
<dbReference type="Pfam" id="PF05491">
    <property type="entry name" value="RuvB_C"/>
    <property type="match status" value="1"/>
</dbReference>
<dbReference type="Pfam" id="PF05496">
    <property type="entry name" value="RuvB_N"/>
    <property type="match status" value="1"/>
</dbReference>
<dbReference type="SMART" id="SM00382">
    <property type="entry name" value="AAA"/>
    <property type="match status" value="1"/>
</dbReference>
<dbReference type="SUPFAM" id="SSF52540">
    <property type="entry name" value="P-loop containing nucleoside triphosphate hydrolases"/>
    <property type="match status" value="1"/>
</dbReference>
<dbReference type="SUPFAM" id="SSF46785">
    <property type="entry name" value="Winged helix' DNA-binding domain"/>
    <property type="match status" value="1"/>
</dbReference>
<name>RUVB_GEOTN</name>
<comment type="function">
    <text evidence="1">The RuvA-RuvB-RuvC complex processes Holliday junction (HJ) DNA during genetic recombination and DNA repair, while the RuvA-RuvB complex plays an important role in the rescue of blocked DNA replication forks via replication fork reversal (RFR). RuvA specifically binds to HJ cruciform DNA, conferring on it an open structure. The RuvB hexamer acts as an ATP-dependent pump, pulling dsDNA into and through the RuvAB complex. RuvB forms 2 homohexamers on either side of HJ DNA bound by 1 or 2 RuvA tetramers; 4 subunits per hexamer contact DNA at a time. Coordinated motions by a converter formed by DNA-disengaged RuvB subunits stimulates ATP hydrolysis and nucleotide exchange. Immobilization of the converter enables RuvB to convert the ATP-contained energy into a lever motion, pulling 2 nucleotides of DNA out of the RuvA tetramer per ATP hydrolyzed, thus driving DNA branch migration. The RuvB motors rotate together with the DNA substrate, which together with the progressing nucleotide cycle form the mechanistic basis for DNA recombination by continuous HJ branch migration. Branch migration allows RuvC to scan DNA until it finds its consensus sequence, where it cleaves and resolves cruciform DNA.</text>
</comment>
<comment type="catalytic activity">
    <reaction evidence="1">
        <text>ATP + H2O = ADP + phosphate + H(+)</text>
        <dbReference type="Rhea" id="RHEA:13065"/>
        <dbReference type="ChEBI" id="CHEBI:15377"/>
        <dbReference type="ChEBI" id="CHEBI:15378"/>
        <dbReference type="ChEBI" id="CHEBI:30616"/>
        <dbReference type="ChEBI" id="CHEBI:43474"/>
        <dbReference type="ChEBI" id="CHEBI:456216"/>
    </reaction>
</comment>
<comment type="subunit">
    <text evidence="1">Homohexamer. Forms an RuvA(8)-RuvB(12)-Holliday junction (HJ) complex. HJ DNA is sandwiched between 2 RuvA tetramers; dsDNA enters through RuvA and exits via RuvB. An RuvB hexamer assembles on each DNA strand where it exits the tetramer. Each RuvB hexamer is contacted by two RuvA subunits (via domain III) on 2 adjacent RuvB subunits; this complex drives branch migration. In the full resolvosome a probable DNA-RuvA(4)-RuvB(12)-RuvC(2) complex forms which resolves the HJ.</text>
</comment>
<comment type="subcellular location">
    <subcellularLocation>
        <location evidence="1">Cytoplasm</location>
    </subcellularLocation>
</comment>
<comment type="domain">
    <text evidence="1">Has 3 domains, the large (RuvB-L) and small ATPase (RuvB-S) domains and the C-terminal head (RuvB-H) domain. The head domain binds DNA, while the ATPase domains jointly bind ATP, ADP or are empty depending on the state of the subunit in the translocation cycle. During a single DNA translocation step the structure of each domain remains the same, but their relative positions change.</text>
</comment>
<comment type="similarity">
    <text evidence="1">Belongs to the RuvB family.</text>
</comment>
<proteinExistence type="inferred from homology"/>
<sequence>MDERLVSGSALGGEAAFEPTLRPQYLHEYIGQDKVKENLQVFIEAAKLREETLDHVLLYGPPGLGKTTLAAIIANEMGVKMRATSGPALERPGDLAALLTSLEPGDVLFIDEIHRLPRTVEEVLYPAMEDYCLDITVGKGPEARSLRLDLPPFTLVGATTRAGALSAPLRDRFGVISRLEYYQVDQLAQIIERAAAILHIIINNEAALELARRARGTPRIANRLLRRVRDFAQVRGDGEITLPLAVEALERLQVDRLGLDHIDHKLLLAIIEKFAGGPVGLETMAAVIGEEAQTIEEVYEPYLLQIGLLQRTPRGRVATPAAYAHLGMEVPKR</sequence>
<protein>
    <recommendedName>
        <fullName evidence="1">Holliday junction branch migration complex subunit RuvB</fullName>
        <ecNumber evidence="1">3.6.4.-</ecNumber>
    </recommendedName>
</protein>
<gene>
    <name evidence="1" type="primary">ruvB</name>
    <name type="ordered locus">GTNG_2521</name>
</gene>
<feature type="chain" id="PRO_1000001412" description="Holliday junction branch migration complex subunit RuvB">
    <location>
        <begin position="1"/>
        <end position="333"/>
    </location>
</feature>
<feature type="region of interest" description="Large ATPase domain (RuvB-L)" evidence="1">
    <location>
        <begin position="1"/>
        <end position="182"/>
    </location>
</feature>
<feature type="region of interest" description="Small ATPAse domain (RuvB-S)" evidence="1">
    <location>
        <begin position="183"/>
        <end position="253"/>
    </location>
</feature>
<feature type="region of interest" description="Head domain (RuvB-H)" evidence="1">
    <location>
        <begin position="256"/>
        <end position="333"/>
    </location>
</feature>
<feature type="binding site" evidence="1">
    <location>
        <position position="21"/>
    </location>
    <ligand>
        <name>ATP</name>
        <dbReference type="ChEBI" id="CHEBI:30616"/>
    </ligand>
</feature>
<feature type="binding site" evidence="1">
    <location>
        <position position="22"/>
    </location>
    <ligand>
        <name>ATP</name>
        <dbReference type="ChEBI" id="CHEBI:30616"/>
    </ligand>
</feature>
<feature type="binding site" evidence="1">
    <location>
        <position position="63"/>
    </location>
    <ligand>
        <name>ATP</name>
        <dbReference type="ChEBI" id="CHEBI:30616"/>
    </ligand>
</feature>
<feature type="binding site" evidence="1">
    <location>
        <position position="66"/>
    </location>
    <ligand>
        <name>ATP</name>
        <dbReference type="ChEBI" id="CHEBI:30616"/>
    </ligand>
</feature>
<feature type="binding site" evidence="1">
    <location>
        <position position="67"/>
    </location>
    <ligand>
        <name>ATP</name>
        <dbReference type="ChEBI" id="CHEBI:30616"/>
    </ligand>
</feature>
<feature type="binding site" evidence="1">
    <location>
        <position position="67"/>
    </location>
    <ligand>
        <name>Mg(2+)</name>
        <dbReference type="ChEBI" id="CHEBI:18420"/>
    </ligand>
</feature>
<feature type="binding site" evidence="1">
    <location>
        <position position="68"/>
    </location>
    <ligand>
        <name>ATP</name>
        <dbReference type="ChEBI" id="CHEBI:30616"/>
    </ligand>
</feature>
<feature type="binding site" evidence="1">
    <location>
        <begin position="129"/>
        <end position="131"/>
    </location>
    <ligand>
        <name>ATP</name>
        <dbReference type="ChEBI" id="CHEBI:30616"/>
    </ligand>
</feature>
<feature type="binding site" evidence="1">
    <location>
        <position position="172"/>
    </location>
    <ligand>
        <name>ATP</name>
        <dbReference type="ChEBI" id="CHEBI:30616"/>
    </ligand>
</feature>
<feature type="binding site" evidence="1">
    <location>
        <position position="182"/>
    </location>
    <ligand>
        <name>ATP</name>
        <dbReference type="ChEBI" id="CHEBI:30616"/>
    </ligand>
</feature>
<feature type="binding site" evidence="1">
    <location>
        <position position="219"/>
    </location>
    <ligand>
        <name>ATP</name>
        <dbReference type="ChEBI" id="CHEBI:30616"/>
    </ligand>
</feature>
<feature type="binding site" evidence="1">
    <location>
        <position position="311"/>
    </location>
    <ligand>
        <name>DNA</name>
        <dbReference type="ChEBI" id="CHEBI:16991"/>
    </ligand>
</feature>
<feature type="binding site" evidence="1">
    <location>
        <position position="316"/>
    </location>
    <ligand>
        <name>DNA</name>
        <dbReference type="ChEBI" id="CHEBI:16991"/>
    </ligand>
</feature>
<keyword id="KW-0067">ATP-binding</keyword>
<keyword id="KW-0963">Cytoplasm</keyword>
<keyword id="KW-0227">DNA damage</keyword>
<keyword id="KW-0233">DNA recombination</keyword>
<keyword id="KW-0234">DNA repair</keyword>
<keyword id="KW-0238">DNA-binding</keyword>
<keyword id="KW-0378">Hydrolase</keyword>
<keyword id="KW-0547">Nucleotide-binding</keyword>
<organism>
    <name type="scientific">Geobacillus thermodenitrificans (strain NG80-2)</name>
    <dbReference type="NCBI Taxonomy" id="420246"/>
    <lineage>
        <taxon>Bacteria</taxon>
        <taxon>Bacillati</taxon>
        <taxon>Bacillota</taxon>
        <taxon>Bacilli</taxon>
        <taxon>Bacillales</taxon>
        <taxon>Anoxybacillaceae</taxon>
        <taxon>Geobacillus</taxon>
    </lineage>
</organism>
<reference key="1">
    <citation type="journal article" date="2007" name="Proc. Natl. Acad. Sci. U.S.A.">
        <title>Genome and proteome of long-chain alkane degrading Geobacillus thermodenitrificans NG80-2 isolated from a deep-subsurface oil reservoir.</title>
        <authorList>
            <person name="Feng L."/>
            <person name="Wang W."/>
            <person name="Cheng J."/>
            <person name="Ren Y."/>
            <person name="Zhao G."/>
            <person name="Gao C."/>
            <person name="Tang Y."/>
            <person name="Liu X."/>
            <person name="Han W."/>
            <person name="Peng X."/>
            <person name="Liu R."/>
            <person name="Wang L."/>
        </authorList>
    </citation>
    <scope>NUCLEOTIDE SEQUENCE [LARGE SCALE GENOMIC DNA]</scope>
    <source>
        <strain>NG80-2</strain>
    </source>
</reference>
<evidence type="ECO:0000255" key="1">
    <source>
        <dbReference type="HAMAP-Rule" id="MF_00016"/>
    </source>
</evidence>